<feature type="chain" id="PRO_0000273904" description="Large ribosomal subunit protein uL30">
    <location>
        <begin position="1"/>
        <end position="149"/>
    </location>
</feature>
<sequence length="149" mass="17195">MRGPVGVRRDIEDTMRMLKLLRRNWCVLIDDRPSYLGMLQKIKDYVTWGEVEPDTVAALLKKRGELEGGRPVTDEYVSEHTEYDSVEEFARAYCEFEAELDDIPKLKPFFRLHPPRGGYERGGIKKPYTLGGALGYRGKAINDLLERMI</sequence>
<proteinExistence type="inferred from homology"/>
<name>RL30_METKA</name>
<keyword id="KW-1185">Reference proteome</keyword>
<keyword id="KW-0687">Ribonucleoprotein</keyword>
<keyword id="KW-0689">Ribosomal protein</keyword>
<comment type="subunit">
    <text evidence="1">Part of the 50S ribosomal subunit.</text>
</comment>
<comment type="similarity">
    <text evidence="1">Belongs to the universal ribosomal protein uL30 family.</text>
</comment>
<protein>
    <recommendedName>
        <fullName evidence="1">Large ribosomal subunit protein uL30</fullName>
    </recommendedName>
    <alternativeName>
        <fullName evidence="2">50S ribosomal protein L30</fullName>
    </alternativeName>
</protein>
<evidence type="ECO:0000255" key="1">
    <source>
        <dbReference type="HAMAP-Rule" id="MF_01371"/>
    </source>
</evidence>
<evidence type="ECO:0000305" key="2"/>
<accession>Q8TZA7</accession>
<organism>
    <name type="scientific">Methanopyrus kandleri (strain AV19 / DSM 6324 / JCM 9639 / NBRC 100938)</name>
    <dbReference type="NCBI Taxonomy" id="190192"/>
    <lineage>
        <taxon>Archaea</taxon>
        <taxon>Methanobacteriati</taxon>
        <taxon>Methanobacteriota</taxon>
        <taxon>Methanomada group</taxon>
        <taxon>Methanopyri</taxon>
        <taxon>Methanopyrales</taxon>
        <taxon>Methanopyraceae</taxon>
        <taxon>Methanopyrus</taxon>
    </lineage>
</organism>
<dbReference type="EMBL" id="AE009439">
    <property type="protein sequence ID" value="AAM01245.1"/>
    <property type="molecule type" value="Genomic_DNA"/>
</dbReference>
<dbReference type="SMR" id="Q8TZA7"/>
<dbReference type="FunCoup" id="Q8TZA7">
    <property type="interactions" value="145"/>
</dbReference>
<dbReference type="STRING" id="190192.MK0028"/>
<dbReference type="PaxDb" id="190192-MK0028"/>
<dbReference type="EnsemblBacteria" id="AAM01245">
    <property type="protein sequence ID" value="AAM01245"/>
    <property type="gene ID" value="MK0028"/>
</dbReference>
<dbReference type="KEGG" id="mka:MK0028"/>
<dbReference type="PATRIC" id="fig|190192.8.peg.28"/>
<dbReference type="HOGENOM" id="CLU_055156_6_0_2"/>
<dbReference type="InParanoid" id="Q8TZA7"/>
<dbReference type="Proteomes" id="UP000001826">
    <property type="component" value="Chromosome"/>
</dbReference>
<dbReference type="GO" id="GO:0022625">
    <property type="term" value="C:cytosolic large ribosomal subunit"/>
    <property type="evidence" value="ECO:0007669"/>
    <property type="project" value="TreeGrafter"/>
</dbReference>
<dbReference type="GO" id="GO:0003723">
    <property type="term" value="F:RNA binding"/>
    <property type="evidence" value="ECO:0007669"/>
    <property type="project" value="TreeGrafter"/>
</dbReference>
<dbReference type="GO" id="GO:0003735">
    <property type="term" value="F:structural constituent of ribosome"/>
    <property type="evidence" value="ECO:0007669"/>
    <property type="project" value="InterPro"/>
</dbReference>
<dbReference type="GO" id="GO:0000463">
    <property type="term" value="P:maturation of LSU-rRNA from tricistronic rRNA transcript (SSU-rRNA, 5.8S rRNA, LSU-rRNA)"/>
    <property type="evidence" value="ECO:0007669"/>
    <property type="project" value="TreeGrafter"/>
</dbReference>
<dbReference type="GO" id="GO:0006412">
    <property type="term" value="P:translation"/>
    <property type="evidence" value="ECO:0007669"/>
    <property type="project" value="UniProtKB-UniRule"/>
</dbReference>
<dbReference type="CDD" id="cd01657">
    <property type="entry name" value="Ribosomal_L7_archeal_euk"/>
    <property type="match status" value="1"/>
</dbReference>
<dbReference type="Gene3D" id="1.10.15.30">
    <property type="match status" value="1"/>
</dbReference>
<dbReference type="Gene3D" id="3.30.1390.20">
    <property type="entry name" value="Ribosomal protein L30, ferredoxin-like fold domain"/>
    <property type="match status" value="1"/>
</dbReference>
<dbReference type="HAMAP" id="MF_01371_A">
    <property type="entry name" value="Ribosomal_uL30_A"/>
    <property type="match status" value="1"/>
</dbReference>
<dbReference type="InterPro" id="IPR036919">
    <property type="entry name" value="Ribo_uL30_ferredoxin-like_sf"/>
</dbReference>
<dbReference type="InterPro" id="IPR039699">
    <property type="entry name" value="Ribosomal_uL30"/>
</dbReference>
<dbReference type="InterPro" id="IPR005997">
    <property type="entry name" value="Ribosomal_uL30_arc"/>
</dbReference>
<dbReference type="InterPro" id="IPR035808">
    <property type="entry name" value="Ribosomal_uL30_euk_arc"/>
</dbReference>
<dbReference type="InterPro" id="IPR016082">
    <property type="entry name" value="Ribosomal_uL30_ferredoxin-like"/>
</dbReference>
<dbReference type="NCBIfam" id="NF004711">
    <property type="entry name" value="PRK06049.1"/>
    <property type="match status" value="1"/>
</dbReference>
<dbReference type="NCBIfam" id="TIGR01309">
    <property type="entry name" value="uL30_arch"/>
    <property type="match status" value="1"/>
</dbReference>
<dbReference type="PANTHER" id="PTHR11524">
    <property type="entry name" value="60S RIBOSOMAL PROTEIN L7"/>
    <property type="match status" value="1"/>
</dbReference>
<dbReference type="PANTHER" id="PTHR11524:SF16">
    <property type="entry name" value="LARGE RIBOSOMAL SUBUNIT PROTEIN UL30"/>
    <property type="match status" value="1"/>
</dbReference>
<dbReference type="Pfam" id="PF00327">
    <property type="entry name" value="Ribosomal_L30"/>
    <property type="match status" value="1"/>
</dbReference>
<dbReference type="SUPFAM" id="SSF55129">
    <property type="entry name" value="Ribosomal protein L30p/L7e"/>
    <property type="match status" value="1"/>
</dbReference>
<gene>
    <name evidence="1" type="primary">rpl30</name>
    <name type="ordered locus">MK0028</name>
</gene>
<reference key="1">
    <citation type="journal article" date="2002" name="Proc. Natl. Acad. Sci. U.S.A.">
        <title>The complete genome of hyperthermophile Methanopyrus kandleri AV19 and monophyly of archaeal methanogens.</title>
        <authorList>
            <person name="Slesarev A.I."/>
            <person name="Mezhevaya K.V."/>
            <person name="Makarova K.S."/>
            <person name="Polushin N.N."/>
            <person name="Shcherbinina O.V."/>
            <person name="Shakhova V.V."/>
            <person name="Belova G.I."/>
            <person name="Aravind L."/>
            <person name="Natale D.A."/>
            <person name="Rogozin I.B."/>
            <person name="Tatusov R.L."/>
            <person name="Wolf Y.I."/>
            <person name="Stetter K.O."/>
            <person name="Malykh A.G."/>
            <person name="Koonin E.V."/>
            <person name="Kozyavkin S.A."/>
        </authorList>
    </citation>
    <scope>NUCLEOTIDE SEQUENCE [LARGE SCALE GENOMIC DNA]</scope>
    <source>
        <strain>AV19 / DSM 6324 / JCM 9639 / NBRC 100938</strain>
    </source>
</reference>